<sequence length="98" mass="11445">MNLKDQEQTKIVNNLIAKTDYLLSNNLNPLESVRSEINKTLALTHSTYQQDSNIKKSWIQKSVQKIKDLFINIFSSNKTKNEPKLNLTSDKILKKYKY</sequence>
<organism>
    <name type="scientific">Rickettsia conorii (strain ATCC VR-613 / Malish 7)</name>
    <dbReference type="NCBI Taxonomy" id="272944"/>
    <lineage>
        <taxon>Bacteria</taxon>
        <taxon>Pseudomonadati</taxon>
        <taxon>Pseudomonadota</taxon>
        <taxon>Alphaproteobacteria</taxon>
        <taxon>Rickettsiales</taxon>
        <taxon>Rickettsiaceae</taxon>
        <taxon>Rickettsieae</taxon>
        <taxon>Rickettsia</taxon>
        <taxon>spotted fever group</taxon>
    </lineage>
</organism>
<dbReference type="EMBL" id="AE006914">
    <property type="protein sequence ID" value="AAL02671.1"/>
    <property type="molecule type" value="Genomic_DNA"/>
</dbReference>
<dbReference type="PIR" id="E97716">
    <property type="entry name" value="E97716"/>
</dbReference>
<dbReference type="SMR" id="Q92JD4"/>
<dbReference type="KEGG" id="rco:RC0133"/>
<dbReference type="PATRIC" id="fig|272944.4.peg.156"/>
<dbReference type="HOGENOM" id="CLU_170378_0_0_5"/>
<dbReference type="Proteomes" id="UP000000816">
    <property type="component" value="Chromosome"/>
</dbReference>
<accession>Q92JD4</accession>
<proteinExistence type="predicted"/>
<name>Y133_RICCN</name>
<protein>
    <recommendedName>
        <fullName>Uncharacterized protein RC0133</fullName>
    </recommendedName>
</protein>
<feature type="chain" id="PRO_0000101455" description="Uncharacterized protein RC0133">
    <location>
        <begin position="1"/>
        <end position="98"/>
    </location>
</feature>
<reference key="1">
    <citation type="journal article" date="2001" name="Science">
        <title>Mechanisms of evolution in Rickettsia conorii and R. prowazekii.</title>
        <authorList>
            <person name="Ogata H."/>
            <person name="Audic S."/>
            <person name="Renesto-Audiffren P."/>
            <person name="Fournier P.-E."/>
            <person name="Barbe V."/>
            <person name="Samson D."/>
            <person name="Roux V."/>
            <person name="Cossart P."/>
            <person name="Weissenbach J."/>
            <person name="Claverie J.-M."/>
            <person name="Raoult D."/>
        </authorList>
    </citation>
    <scope>NUCLEOTIDE SEQUENCE [LARGE SCALE GENOMIC DNA]</scope>
    <source>
        <strain>ATCC VR-613 / Malish 7</strain>
    </source>
</reference>
<gene>
    <name type="ordered locus">RC0133</name>
</gene>